<sequence length="403" mass="44853">MKNKVFASIGDAVKDIKVGRMVIVVDDPGRENEGDLICAAEKASPEVINFMTKYARGLICVPMKHERLKELEIENMVEKPTEKKGCSFTVSVDYKIGTTTGISAYDRSVTVRKLIDKTAKHEDFARPGHIFPLRCKEGGVLARTGHTEAAVDLVRLAGFYPAGIICEIMNNDGTMARMSDLIKFAKKHDLHIITIGELVNYRRRTEKFISEIVNVDLPTRYGDFKLVLFEDLITKDSHIAVVKGVVKNRQNVLVRVHSSCETGDIFHSLRCDCGDQLETALKAVGEAEQGVVLYIHQEGRGIGLANKLKAYRLQEKGMDTVEANKALGFDPDLRDYGIGAQMLSELGIKSINLMTNNPGKINGLESYGLKITKRVPLEISPSKSNEKYLKTKKEKMGHMLKKV</sequence>
<keyword id="KW-0342">GTP-binding</keyword>
<keyword id="KW-0378">Hydrolase</keyword>
<keyword id="KW-0456">Lyase</keyword>
<keyword id="KW-0460">Magnesium</keyword>
<keyword id="KW-0464">Manganese</keyword>
<keyword id="KW-0479">Metal-binding</keyword>
<keyword id="KW-0511">Multifunctional enzyme</keyword>
<keyword id="KW-0547">Nucleotide-binding</keyword>
<keyword id="KW-0686">Riboflavin biosynthesis</keyword>
<keyword id="KW-0862">Zinc</keyword>
<comment type="function">
    <text evidence="1">Catalyzes the conversion of D-ribulose 5-phosphate to formate and 3,4-dihydroxy-2-butanone 4-phosphate.</text>
</comment>
<comment type="function">
    <text evidence="1">Catalyzes the conversion of GTP to 2,5-diamino-6-ribosylamino-4(3H)-pyrimidinone 5'-phosphate (DARP), formate and pyrophosphate.</text>
</comment>
<comment type="catalytic activity">
    <reaction evidence="1">
        <text>D-ribulose 5-phosphate = (2S)-2-hydroxy-3-oxobutyl phosphate + formate + H(+)</text>
        <dbReference type="Rhea" id="RHEA:18457"/>
        <dbReference type="ChEBI" id="CHEBI:15378"/>
        <dbReference type="ChEBI" id="CHEBI:15740"/>
        <dbReference type="ChEBI" id="CHEBI:58121"/>
        <dbReference type="ChEBI" id="CHEBI:58830"/>
        <dbReference type="EC" id="4.1.99.12"/>
    </reaction>
</comment>
<comment type="catalytic activity">
    <reaction evidence="1">
        <text>GTP + 4 H2O = 2,5-diamino-6-hydroxy-4-(5-phosphoribosylamino)-pyrimidine + formate + 2 phosphate + 3 H(+)</text>
        <dbReference type="Rhea" id="RHEA:23704"/>
        <dbReference type="ChEBI" id="CHEBI:15377"/>
        <dbReference type="ChEBI" id="CHEBI:15378"/>
        <dbReference type="ChEBI" id="CHEBI:15740"/>
        <dbReference type="ChEBI" id="CHEBI:37565"/>
        <dbReference type="ChEBI" id="CHEBI:43474"/>
        <dbReference type="ChEBI" id="CHEBI:58614"/>
        <dbReference type="EC" id="3.5.4.25"/>
    </reaction>
</comment>
<comment type="cofactor">
    <cofactor evidence="1">
        <name>Mg(2+)</name>
        <dbReference type="ChEBI" id="CHEBI:18420"/>
    </cofactor>
    <cofactor evidence="1">
        <name>Mn(2+)</name>
        <dbReference type="ChEBI" id="CHEBI:29035"/>
    </cofactor>
    <text evidence="1">Binds 2 divalent metal cations per subunit. Magnesium or manganese.</text>
</comment>
<comment type="cofactor">
    <cofactor evidence="1">
        <name>Zn(2+)</name>
        <dbReference type="ChEBI" id="CHEBI:29105"/>
    </cofactor>
    <text evidence="1">Binds 1 zinc ion per subunit.</text>
</comment>
<comment type="pathway">
    <text evidence="1">Cofactor biosynthesis; riboflavin biosynthesis; 2-hydroxy-3-oxobutyl phosphate from D-ribulose 5-phosphate: step 1/1.</text>
</comment>
<comment type="pathway">
    <text evidence="1">Cofactor biosynthesis; riboflavin biosynthesis; 5-amino-6-(D-ribitylamino)uracil from GTP: step 1/4.</text>
</comment>
<comment type="similarity">
    <text evidence="1">In the N-terminal section; belongs to the DHBP synthase family.</text>
</comment>
<comment type="similarity">
    <text evidence="1">In the C-terminal section; belongs to the GTP cyclohydrolase II family.</text>
</comment>
<gene>
    <name evidence="1" type="primary">ribBA</name>
    <name type="ordered locus">TGRD_529</name>
</gene>
<name>RIBBA_ENDTX</name>
<reference key="1">
    <citation type="journal article" date="2008" name="Proc. Natl. Acad. Sci. U.S.A.">
        <title>Complete genome of the uncultured termite group 1 bacteria in a single host protist cell.</title>
        <authorList>
            <person name="Hongoh Y."/>
            <person name="Sharma V.K."/>
            <person name="Prakash T."/>
            <person name="Noda S."/>
            <person name="Taylor T.D."/>
            <person name="Kudo T."/>
            <person name="Sakaki Y."/>
            <person name="Toyoda A."/>
            <person name="Hattori M."/>
            <person name="Ohkuma M."/>
        </authorList>
    </citation>
    <scope>NUCLEOTIDE SEQUENCE [LARGE SCALE GENOMIC DNA]</scope>
</reference>
<accession>B1H0I0</accession>
<dbReference type="EC" id="4.1.99.12" evidence="1"/>
<dbReference type="EC" id="3.5.4.25" evidence="1"/>
<dbReference type="EMBL" id="AP009510">
    <property type="protein sequence ID" value="BAG14012.1"/>
    <property type="molecule type" value="Genomic_DNA"/>
</dbReference>
<dbReference type="RefSeq" id="WP_015423537.1">
    <property type="nucleotide sequence ID" value="NC_020419.1"/>
</dbReference>
<dbReference type="SMR" id="B1H0I0"/>
<dbReference type="STRING" id="471821.TGRD_529"/>
<dbReference type="KEGG" id="rsd:TGRD_529"/>
<dbReference type="PATRIC" id="fig|471821.5.peg.863"/>
<dbReference type="HOGENOM" id="CLU_020273_1_2_0"/>
<dbReference type="UniPathway" id="UPA00275">
    <property type="reaction ID" value="UER00399"/>
</dbReference>
<dbReference type="UniPathway" id="UPA00275">
    <property type="reaction ID" value="UER00400"/>
</dbReference>
<dbReference type="Proteomes" id="UP000001691">
    <property type="component" value="Chromosome"/>
</dbReference>
<dbReference type="GO" id="GO:0005829">
    <property type="term" value="C:cytosol"/>
    <property type="evidence" value="ECO:0007669"/>
    <property type="project" value="TreeGrafter"/>
</dbReference>
<dbReference type="GO" id="GO:0008686">
    <property type="term" value="F:3,4-dihydroxy-2-butanone-4-phosphate synthase activity"/>
    <property type="evidence" value="ECO:0007669"/>
    <property type="project" value="UniProtKB-UniRule"/>
</dbReference>
<dbReference type="GO" id="GO:0005525">
    <property type="term" value="F:GTP binding"/>
    <property type="evidence" value="ECO:0007669"/>
    <property type="project" value="UniProtKB-KW"/>
</dbReference>
<dbReference type="GO" id="GO:0003935">
    <property type="term" value="F:GTP cyclohydrolase II activity"/>
    <property type="evidence" value="ECO:0007669"/>
    <property type="project" value="UniProtKB-UniRule"/>
</dbReference>
<dbReference type="GO" id="GO:0000287">
    <property type="term" value="F:magnesium ion binding"/>
    <property type="evidence" value="ECO:0007669"/>
    <property type="project" value="UniProtKB-UniRule"/>
</dbReference>
<dbReference type="GO" id="GO:0030145">
    <property type="term" value="F:manganese ion binding"/>
    <property type="evidence" value="ECO:0007669"/>
    <property type="project" value="UniProtKB-UniRule"/>
</dbReference>
<dbReference type="GO" id="GO:0008270">
    <property type="term" value="F:zinc ion binding"/>
    <property type="evidence" value="ECO:0007669"/>
    <property type="project" value="UniProtKB-UniRule"/>
</dbReference>
<dbReference type="GO" id="GO:0009231">
    <property type="term" value="P:riboflavin biosynthetic process"/>
    <property type="evidence" value="ECO:0007669"/>
    <property type="project" value="UniProtKB-UniRule"/>
</dbReference>
<dbReference type="CDD" id="cd00641">
    <property type="entry name" value="GTP_cyclohydro2"/>
    <property type="match status" value="1"/>
</dbReference>
<dbReference type="FunFam" id="3.40.50.10990:FF:000001">
    <property type="entry name" value="Riboflavin biosynthesis protein RibBA"/>
    <property type="match status" value="1"/>
</dbReference>
<dbReference type="FunFam" id="3.90.870.10:FF:000001">
    <property type="entry name" value="Riboflavin biosynthesis protein RibBA"/>
    <property type="match status" value="1"/>
</dbReference>
<dbReference type="Gene3D" id="3.90.870.10">
    <property type="entry name" value="DHBP synthase"/>
    <property type="match status" value="1"/>
</dbReference>
<dbReference type="Gene3D" id="3.40.50.10990">
    <property type="entry name" value="GTP cyclohydrolase II"/>
    <property type="match status" value="1"/>
</dbReference>
<dbReference type="HAMAP" id="MF_00179">
    <property type="entry name" value="RibA"/>
    <property type="match status" value="1"/>
</dbReference>
<dbReference type="HAMAP" id="MF_00180">
    <property type="entry name" value="RibB"/>
    <property type="match status" value="1"/>
</dbReference>
<dbReference type="HAMAP" id="MF_01283">
    <property type="entry name" value="RibBA"/>
    <property type="match status" value="1"/>
</dbReference>
<dbReference type="InterPro" id="IPR017945">
    <property type="entry name" value="DHBP_synth_RibB-like_a/b_dom"/>
</dbReference>
<dbReference type="InterPro" id="IPR000422">
    <property type="entry name" value="DHBP_synthase_RibB"/>
</dbReference>
<dbReference type="InterPro" id="IPR032677">
    <property type="entry name" value="GTP_cyclohydro_II"/>
</dbReference>
<dbReference type="InterPro" id="IPR000926">
    <property type="entry name" value="RibA"/>
</dbReference>
<dbReference type="InterPro" id="IPR036144">
    <property type="entry name" value="RibA-like_sf"/>
</dbReference>
<dbReference type="InterPro" id="IPR016299">
    <property type="entry name" value="Riboflavin_synth_RibBA"/>
</dbReference>
<dbReference type="NCBIfam" id="NF001591">
    <property type="entry name" value="PRK00393.1"/>
    <property type="match status" value="1"/>
</dbReference>
<dbReference type="NCBIfam" id="NF006803">
    <property type="entry name" value="PRK09311.1"/>
    <property type="match status" value="1"/>
</dbReference>
<dbReference type="NCBIfam" id="TIGR00505">
    <property type="entry name" value="ribA"/>
    <property type="match status" value="1"/>
</dbReference>
<dbReference type="NCBIfam" id="TIGR00506">
    <property type="entry name" value="ribB"/>
    <property type="match status" value="1"/>
</dbReference>
<dbReference type="PANTHER" id="PTHR21327:SF18">
    <property type="entry name" value="3,4-DIHYDROXY-2-BUTANONE 4-PHOSPHATE SYNTHASE"/>
    <property type="match status" value="1"/>
</dbReference>
<dbReference type="PANTHER" id="PTHR21327">
    <property type="entry name" value="GTP CYCLOHYDROLASE II-RELATED"/>
    <property type="match status" value="1"/>
</dbReference>
<dbReference type="Pfam" id="PF00926">
    <property type="entry name" value="DHBP_synthase"/>
    <property type="match status" value="1"/>
</dbReference>
<dbReference type="Pfam" id="PF00925">
    <property type="entry name" value="GTP_cyclohydro2"/>
    <property type="match status" value="1"/>
</dbReference>
<dbReference type="PIRSF" id="PIRSF001259">
    <property type="entry name" value="RibA"/>
    <property type="match status" value="1"/>
</dbReference>
<dbReference type="SUPFAM" id="SSF142695">
    <property type="entry name" value="RibA-like"/>
    <property type="match status" value="1"/>
</dbReference>
<dbReference type="SUPFAM" id="SSF55821">
    <property type="entry name" value="YrdC/RibB"/>
    <property type="match status" value="1"/>
</dbReference>
<feature type="chain" id="PRO_1000140369" description="Riboflavin biosynthesis protein RibBA">
    <location>
        <begin position="1"/>
        <end position="403"/>
    </location>
</feature>
<feature type="region of interest" description="DHBP synthase">
    <location>
        <begin position="1"/>
        <end position="204"/>
    </location>
</feature>
<feature type="region of interest" description="GTP cyclohydrolase II">
    <location>
        <begin position="205"/>
        <end position="403"/>
    </location>
</feature>
<feature type="active site" description="Proton acceptor; for GTP cyclohydrolase activity" evidence="1">
    <location>
        <position position="332"/>
    </location>
</feature>
<feature type="active site" description="Nucleophile; for GTP cyclohydrolase activity" evidence="1">
    <location>
        <position position="334"/>
    </location>
</feature>
<feature type="binding site" evidence="1">
    <location>
        <begin position="30"/>
        <end position="31"/>
    </location>
    <ligand>
        <name>D-ribulose 5-phosphate</name>
        <dbReference type="ChEBI" id="CHEBI:58121"/>
    </ligand>
</feature>
<feature type="binding site" evidence="1">
    <location>
        <position position="31"/>
    </location>
    <ligand>
        <name>Mg(2+)</name>
        <dbReference type="ChEBI" id="CHEBI:18420"/>
        <label>1</label>
    </ligand>
</feature>
<feature type="binding site" evidence="1">
    <location>
        <position position="31"/>
    </location>
    <ligand>
        <name>Mg(2+)</name>
        <dbReference type="ChEBI" id="CHEBI:18420"/>
        <label>2</label>
    </ligand>
</feature>
<feature type="binding site" evidence="1">
    <location>
        <position position="35"/>
    </location>
    <ligand>
        <name>D-ribulose 5-phosphate</name>
        <dbReference type="ChEBI" id="CHEBI:58121"/>
    </ligand>
</feature>
<feature type="binding site" evidence="1">
    <location>
        <begin position="143"/>
        <end position="147"/>
    </location>
    <ligand>
        <name>D-ribulose 5-phosphate</name>
        <dbReference type="ChEBI" id="CHEBI:58121"/>
    </ligand>
</feature>
<feature type="binding site" evidence="1">
    <location>
        <position position="146"/>
    </location>
    <ligand>
        <name>Mg(2+)</name>
        <dbReference type="ChEBI" id="CHEBI:18420"/>
        <label>2</label>
    </ligand>
</feature>
<feature type="binding site" evidence="1">
    <location>
        <position position="167"/>
    </location>
    <ligand>
        <name>D-ribulose 5-phosphate</name>
        <dbReference type="ChEBI" id="CHEBI:58121"/>
    </ligand>
</feature>
<feature type="binding site" evidence="1">
    <location>
        <begin position="255"/>
        <end position="259"/>
    </location>
    <ligand>
        <name>GTP</name>
        <dbReference type="ChEBI" id="CHEBI:37565"/>
    </ligand>
</feature>
<feature type="binding site" evidence="1">
    <location>
        <position position="260"/>
    </location>
    <ligand>
        <name>Zn(2+)</name>
        <dbReference type="ChEBI" id="CHEBI:29105"/>
        <note>catalytic</note>
    </ligand>
</feature>
<feature type="binding site" evidence="1">
    <location>
        <position position="271"/>
    </location>
    <ligand>
        <name>Zn(2+)</name>
        <dbReference type="ChEBI" id="CHEBI:29105"/>
        <note>catalytic</note>
    </ligand>
</feature>
<feature type="binding site" evidence="1">
    <location>
        <position position="273"/>
    </location>
    <ligand>
        <name>Zn(2+)</name>
        <dbReference type="ChEBI" id="CHEBI:29105"/>
        <note>catalytic</note>
    </ligand>
</feature>
<feature type="binding site" evidence="1">
    <location>
        <position position="276"/>
    </location>
    <ligand>
        <name>GTP</name>
        <dbReference type="ChEBI" id="CHEBI:37565"/>
    </ligand>
</feature>
<feature type="binding site" evidence="1">
    <location>
        <begin position="298"/>
        <end position="300"/>
    </location>
    <ligand>
        <name>GTP</name>
        <dbReference type="ChEBI" id="CHEBI:37565"/>
    </ligand>
</feature>
<feature type="binding site" evidence="1">
    <location>
        <position position="320"/>
    </location>
    <ligand>
        <name>GTP</name>
        <dbReference type="ChEBI" id="CHEBI:37565"/>
    </ligand>
</feature>
<feature type="binding site" evidence="1">
    <location>
        <position position="355"/>
    </location>
    <ligand>
        <name>GTP</name>
        <dbReference type="ChEBI" id="CHEBI:37565"/>
    </ligand>
</feature>
<feature type="binding site" evidence="1">
    <location>
        <position position="360"/>
    </location>
    <ligand>
        <name>GTP</name>
        <dbReference type="ChEBI" id="CHEBI:37565"/>
    </ligand>
</feature>
<feature type="site" description="Essential for DHBP synthase activity" evidence="1">
    <location>
        <position position="129"/>
    </location>
</feature>
<feature type="site" description="Essential for DHBP synthase activity" evidence="1">
    <location>
        <position position="167"/>
    </location>
</feature>
<organism>
    <name type="scientific">Endomicrobium trichonymphae</name>
    <dbReference type="NCBI Taxonomy" id="1408204"/>
    <lineage>
        <taxon>Bacteria</taxon>
        <taxon>Pseudomonadati</taxon>
        <taxon>Elusimicrobiota</taxon>
        <taxon>Endomicrobiia</taxon>
        <taxon>Endomicrobiales</taxon>
        <taxon>Endomicrobiaceae</taxon>
        <taxon>Candidatus Endomicrobiellum</taxon>
    </lineage>
</organism>
<protein>
    <recommendedName>
        <fullName evidence="1">Riboflavin biosynthesis protein RibBA</fullName>
    </recommendedName>
    <domain>
        <recommendedName>
            <fullName evidence="1">3,4-dihydroxy-2-butanone 4-phosphate synthase</fullName>
            <shortName evidence="1">DHBP synthase</shortName>
            <ecNumber evidence="1">4.1.99.12</ecNumber>
        </recommendedName>
    </domain>
    <domain>
        <recommendedName>
            <fullName evidence="1">GTP cyclohydrolase-2</fullName>
            <ecNumber evidence="1">3.5.4.25</ecNumber>
        </recommendedName>
        <alternativeName>
            <fullName evidence="1">GTP cyclohydrolase II</fullName>
        </alternativeName>
    </domain>
</protein>
<evidence type="ECO:0000255" key="1">
    <source>
        <dbReference type="HAMAP-Rule" id="MF_01283"/>
    </source>
</evidence>
<proteinExistence type="inferred from homology"/>